<keyword id="KW-0050">Antiport</keyword>
<keyword id="KW-0997">Cell inner membrane</keyword>
<keyword id="KW-1003">Cell membrane</keyword>
<keyword id="KW-0406">Ion transport</keyword>
<keyword id="KW-0472">Membrane</keyword>
<keyword id="KW-0915">Sodium</keyword>
<keyword id="KW-0739">Sodium transport</keyword>
<keyword id="KW-0812">Transmembrane</keyword>
<keyword id="KW-1133">Transmembrane helix</keyword>
<keyword id="KW-0813">Transport</keyword>
<reference key="1">
    <citation type="journal article" date="2011" name="J. Bacteriol.">
        <title>Comparative genomics of 28 Salmonella enterica isolates: evidence for CRISPR-mediated adaptive sublineage evolution.</title>
        <authorList>
            <person name="Fricke W.F."/>
            <person name="Mammel M.K."/>
            <person name="McDermott P.F."/>
            <person name="Tartera C."/>
            <person name="White D.G."/>
            <person name="Leclerc J.E."/>
            <person name="Ravel J."/>
            <person name="Cebula T.A."/>
        </authorList>
    </citation>
    <scope>NUCLEOTIDE SEQUENCE [LARGE SCALE GENOMIC DNA]</scope>
    <source>
        <strain>SL483</strain>
    </source>
</reference>
<evidence type="ECO:0000255" key="1">
    <source>
        <dbReference type="HAMAP-Rule" id="MF_00400"/>
    </source>
</evidence>
<comment type="function">
    <text evidence="1">Multidrug efflux pump that functions probably as a Na(+)/drug antiporter.</text>
</comment>
<comment type="subcellular location">
    <subcellularLocation>
        <location evidence="1">Cell inner membrane</location>
        <topology evidence="1">Multi-pass membrane protein</topology>
    </subcellularLocation>
</comment>
<comment type="similarity">
    <text evidence="1">Belongs to the multi antimicrobial extrusion (MATE) (TC 2.A.66.1) family. MdtK subfamily.</text>
</comment>
<sequence>MQKYTSEARQLLALAIPVILAQVAQTAMGFVDTVMAGGYSATDMAAVAIGTSIWLPAILFGHGLLLALTPVIAQLNGSGRRERIAHQVRQGFWLAGFVSVLVMIVLWNAGYIIRSMHNIDPALADKAVGYLRALLWGAPGYLFFQVARNQCEGLAKTKPGMVMGFLGLLVNIPVNYIFIYGHFGMPELGGIGCGVATAAVYWVMFIAMLSYIKHARSMRDIRNETGFGKPDSVVMKRLIQLGLPIALALFFEVTLFAVVALLVSPLGIVDVAGHQIALNFSSLMFVLPMSLAAAVTIRVGYRLGQGSTLDAQTAARTGLGVGICMAVVTAIFTVTLRKHIALLYNDNPEVVALAAQLMLLAAVYQISDSIQVIGSGILRGYKDTRSIFFITFTAYWVLGLPSGYILALTDLVVDRMGPAGFWMGFIIGLTSAAVLMMLRMRYLQRQPSAIILQRAAR</sequence>
<gene>
    <name evidence="1" type="primary">mdtK</name>
    <name type="ordered locus">SeAg_B1749</name>
</gene>
<feature type="chain" id="PRO_1000191100" description="Multidrug resistance protein MdtK">
    <location>
        <begin position="1"/>
        <end position="457"/>
    </location>
</feature>
<feature type="transmembrane region" description="Helical" evidence="1">
    <location>
        <begin position="11"/>
        <end position="31"/>
    </location>
</feature>
<feature type="transmembrane region" description="Helical" evidence="1">
    <location>
        <begin position="53"/>
        <end position="73"/>
    </location>
</feature>
<feature type="transmembrane region" description="Helical" evidence="1">
    <location>
        <begin position="93"/>
        <end position="113"/>
    </location>
</feature>
<feature type="transmembrane region" description="Helical" evidence="1">
    <location>
        <begin position="127"/>
        <end position="147"/>
    </location>
</feature>
<feature type="transmembrane region" description="Helical" evidence="1">
    <location>
        <begin position="160"/>
        <end position="180"/>
    </location>
</feature>
<feature type="transmembrane region" description="Helical" evidence="1">
    <location>
        <begin position="188"/>
        <end position="208"/>
    </location>
</feature>
<feature type="transmembrane region" description="Helical" evidence="1">
    <location>
        <begin position="243"/>
        <end position="263"/>
    </location>
</feature>
<feature type="transmembrane region" description="Helical" evidence="1">
    <location>
        <begin position="276"/>
        <end position="296"/>
    </location>
</feature>
<feature type="transmembrane region" description="Helical" evidence="1">
    <location>
        <begin position="314"/>
        <end position="334"/>
    </location>
</feature>
<feature type="transmembrane region" description="Helical" evidence="1">
    <location>
        <begin position="350"/>
        <end position="370"/>
    </location>
</feature>
<feature type="transmembrane region" description="Helical" evidence="1">
    <location>
        <begin position="387"/>
        <end position="407"/>
    </location>
</feature>
<feature type="transmembrane region" description="Helical" evidence="1">
    <location>
        <begin position="418"/>
        <end position="438"/>
    </location>
</feature>
<protein>
    <recommendedName>
        <fullName evidence="1">Multidrug resistance protein MdtK</fullName>
    </recommendedName>
    <alternativeName>
        <fullName evidence="1">Multidrug-efflux transporter</fullName>
    </alternativeName>
</protein>
<organism>
    <name type="scientific">Salmonella agona (strain SL483)</name>
    <dbReference type="NCBI Taxonomy" id="454166"/>
    <lineage>
        <taxon>Bacteria</taxon>
        <taxon>Pseudomonadati</taxon>
        <taxon>Pseudomonadota</taxon>
        <taxon>Gammaproteobacteria</taxon>
        <taxon>Enterobacterales</taxon>
        <taxon>Enterobacteriaceae</taxon>
        <taxon>Salmonella</taxon>
    </lineage>
</organism>
<name>MDTK_SALA4</name>
<dbReference type="EMBL" id="CP001138">
    <property type="protein sequence ID" value="ACH52413.1"/>
    <property type="molecule type" value="Genomic_DNA"/>
</dbReference>
<dbReference type="RefSeq" id="WP_001175081.1">
    <property type="nucleotide sequence ID" value="NC_011149.1"/>
</dbReference>
<dbReference type="SMR" id="B5F6M2"/>
<dbReference type="KEGG" id="sea:SeAg_B1749"/>
<dbReference type="HOGENOM" id="CLU_012893_6_0_6"/>
<dbReference type="Proteomes" id="UP000008819">
    <property type="component" value="Chromosome"/>
</dbReference>
<dbReference type="GO" id="GO:0005886">
    <property type="term" value="C:plasma membrane"/>
    <property type="evidence" value="ECO:0007669"/>
    <property type="project" value="UniProtKB-SubCell"/>
</dbReference>
<dbReference type="GO" id="GO:0015297">
    <property type="term" value="F:antiporter activity"/>
    <property type="evidence" value="ECO:0007669"/>
    <property type="project" value="UniProtKB-UniRule"/>
</dbReference>
<dbReference type="GO" id="GO:0042910">
    <property type="term" value="F:xenobiotic transmembrane transporter activity"/>
    <property type="evidence" value="ECO:0007669"/>
    <property type="project" value="UniProtKB-UniRule"/>
</dbReference>
<dbReference type="GO" id="GO:0006814">
    <property type="term" value="P:sodium ion transport"/>
    <property type="evidence" value="ECO:0007669"/>
    <property type="project" value="UniProtKB-UniRule"/>
</dbReference>
<dbReference type="GO" id="GO:0006855">
    <property type="term" value="P:xenobiotic transmembrane transport"/>
    <property type="evidence" value="ECO:0007669"/>
    <property type="project" value="UniProtKB-UniRule"/>
</dbReference>
<dbReference type="CDD" id="cd13131">
    <property type="entry name" value="MATE_NorM_like"/>
    <property type="match status" value="1"/>
</dbReference>
<dbReference type="HAMAP" id="MF_00400">
    <property type="entry name" value="MdtK"/>
    <property type="match status" value="1"/>
</dbReference>
<dbReference type="InterPro" id="IPR002528">
    <property type="entry name" value="MATE_fam"/>
</dbReference>
<dbReference type="InterPro" id="IPR050222">
    <property type="entry name" value="MATE_MdtK"/>
</dbReference>
<dbReference type="InterPro" id="IPR048279">
    <property type="entry name" value="MdtK-like"/>
</dbReference>
<dbReference type="InterPro" id="IPR022913">
    <property type="entry name" value="Multidrug-R_MdtK"/>
</dbReference>
<dbReference type="NCBIfam" id="TIGR00797">
    <property type="entry name" value="matE"/>
    <property type="match status" value="1"/>
</dbReference>
<dbReference type="PANTHER" id="PTHR43298:SF2">
    <property type="entry name" value="FMN_FAD EXPORTER YEEO-RELATED"/>
    <property type="match status" value="1"/>
</dbReference>
<dbReference type="PANTHER" id="PTHR43298">
    <property type="entry name" value="MULTIDRUG RESISTANCE PROTEIN NORM-RELATED"/>
    <property type="match status" value="1"/>
</dbReference>
<dbReference type="Pfam" id="PF01554">
    <property type="entry name" value="MatE"/>
    <property type="match status" value="2"/>
</dbReference>
<dbReference type="PIRSF" id="PIRSF006603">
    <property type="entry name" value="DinF"/>
    <property type="match status" value="1"/>
</dbReference>
<accession>B5F6M2</accession>
<proteinExistence type="inferred from homology"/>